<dbReference type="EMBL" id="BX571856">
    <property type="protein sequence ID" value="CAG41491.1"/>
    <property type="molecule type" value="Genomic_DNA"/>
</dbReference>
<dbReference type="RefSeq" id="WP_001056917.1">
    <property type="nucleotide sequence ID" value="NC_002952.2"/>
</dbReference>
<dbReference type="SMR" id="Q6GE12"/>
<dbReference type="KEGG" id="sar:SAR2511"/>
<dbReference type="HOGENOM" id="CLU_055394_0_1_9"/>
<dbReference type="Proteomes" id="UP000000596">
    <property type="component" value="Chromosome"/>
</dbReference>
<dbReference type="GO" id="GO:0005576">
    <property type="term" value="C:extracellular region"/>
    <property type="evidence" value="ECO:0007669"/>
    <property type="project" value="InterPro"/>
</dbReference>
<dbReference type="GO" id="GO:0090729">
    <property type="term" value="F:toxin activity"/>
    <property type="evidence" value="ECO:0007669"/>
    <property type="project" value="UniProtKB-KW"/>
</dbReference>
<dbReference type="GO" id="GO:0051715">
    <property type="term" value="P:cytolysis in another organism"/>
    <property type="evidence" value="ECO:0007669"/>
    <property type="project" value="InterPro"/>
</dbReference>
<dbReference type="Gene3D" id="2.70.240.10">
    <property type="entry name" value="Leukocidin/porin MspA"/>
    <property type="match status" value="1"/>
</dbReference>
<dbReference type="InterPro" id="IPR003963">
    <property type="entry name" value="Bi-component_toxin_staph"/>
</dbReference>
<dbReference type="InterPro" id="IPR016183">
    <property type="entry name" value="Leukocidin/Hemolysin_toxin"/>
</dbReference>
<dbReference type="InterPro" id="IPR036435">
    <property type="entry name" value="Leukocidin/porin_MspA_sf"/>
</dbReference>
<dbReference type="NCBIfam" id="TIGR01002">
    <property type="entry name" value="hlyII"/>
    <property type="match status" value="1"/>
</dbReference>
<dbReference type="Pfam" id="PF07968">
    <property type="entry name" value="Leukocidin"/>
    <property type="match status" value="1"/>
</dbReference>
<dbReference type="PRINTS" id="PR01468">
    <property type="entry name" value="BICOMPNTOXIN"/>
</dbReference>
<dbReference type="SUPFAM" id="SSF56959">
    <property type="entry name" value="Leukocidin-like"/>
    <property type="match status" value="1"/>
</dbReference>
<proteinExistence type="inferred from homology"/>
<accession>Q6GE12</accession>
<sequence>MNMNKLVKSSVATSMALLLLSNTANAEGKITPVSVKKVDDKVTLYKTTATADSDKFKISQILTFNFIKDKSYDKDTLVLKAAGNINSGYERPNPKDYDFSKIYWGAKYNVSISSQSNDSVNVVDYAPKNQNEEFQVQNTLGYTFGGDISISNGLSGGLNGNTAFSETINYKQESYRTTLSRNTNYKNVGWGVEAHKIMNNGWGPYGRDSFHPTYGNELFLAGRQSSAYAGQNFIAQHQMPLLSRSNFNPEFLSVLSHRQDGAKKSKITVTYQREMDLYQIRWNGFYWAGANYKNFKTRTFKSTYEIDWENHKVKLLDTKETENNK</sequence>
<protein>
    <recommendedName>
        <fullName>Gamma-hemolysin component B</fullName>
    </recommendedName>
    <alternativeName>
        <fullName>H-gamma-1</fullName>
    </alternativeName>
    <alternativeName>
        <fullName>H-gamma-I</fullName>
    </alternativeName>
</protein>
<organism>
    <name type="scientific">Staphylococcus aureus (strain MRSA252)</name>
    <dbReference type="NCBI Taxonomy" id="282458"/>
    <lineage>
        <taxon>Bacteria</taxon>
        <taxon>Bacillati</taxon>
        <taxon>Bacillota</taxon>
        <taxon>Bacilli</taxon>
        <taxon>Bacillales</taxon>
        <taxon>Staphylococcaceae</taxon>
        <taxon>Staphylococcus</taxon>
    </lineage>
</organism>
<reference key="1">
    <citation type="journal article" date="2004" name="Proc. Natl. Acad. Sci. U.S.A.">
        <title>Complete genomes of two clinical Staphylococcus aureus strains: evidence for the rapid evolution of virulence and drug resistance.</title>
        <authorList>
            <person name="Holden M.T.G."/>
            <person name="Feil E.J."/>
            <person name="Lindsay J.A."/>
            <person name="Peacock S.J."/>
            <person name="Day N.P.J."/>
            <person name="Enright M.C."/>
            <person name="Foster T.J."/>
            <person name="Moore C.E."/>
            <person name="Hurst L."/>
            <person name="Atkin R."/>
            <person name="Barron A."/>
            <person name="Bason N."/>
            <person name="Bentley S.D."/>
            <person name="Chillingworth C."/>
            <person name="Chillingworth T."/>
            <person name="Churcher C."/>
            <person name="Clark L."/>
            <person name="Corton C."/>
            <person name="Cronin A."/>
            <person name="Doggett J."/>
            <person name="Dowd L."/>
            <person name="Feltwell T."/>
            <person name="Hance Z."/>
            <person name="Harris B."/>
            <person name="Hauser H."/>
            <person name="Holroyd S."/>
            <person name="Jagels K."/>
            <person name="James K.D."/>
            <person name="Lennard N."/>
            <person name="Line A."/>
            <person name="Mayes R."/>
            <person name="Moule S."/>
            <person name="Mungall K."/>
            <person name="Ormond D."/>
            <person name="Quail M.A."/>
            <person name="Rabbinowitsch E."/>
            <person name="Rutherford K.M."/>
            <person name="Sanders M."/>
            <person name="Sharp S."/>
            <person name="Simmonds M."/>
            <person name="Stevens K."/>
            <person name="Whitehead S."/>
            <person name="Barrell B.G."/>
            <person name="Spratt B.G."/>
            <person name="Parkhill J."/>
        </authorList>
    </citation>
    <scope>NUCLEOTIDE SEQUENCE [LARGE SCALE GENOMIC DNA]</scope>
    <source>
        <strain>MRSA252</strain>
    </source>
</reference>
<keyword id="KW-0204">Cytolysis</keyword>
<keyword id="KW-0354">Hemolysis</keyword>
<keyword id="KW-0732">Signal</keyword>
<keyword id="KW-0800">Toxin</keyword>
<keyword id="KW-0843">Virulence</keyword>
<comment type="function">
    <text evidence="2">Toxin that seems to act by forming pores in the membrane of the cell. Has a hemolytic and a leucotoxic activity. Promotes host AMFR-mediated inflammation by mediating 'Lys-27'-linked ubiquitination of TAB3, TAK1-TAB3 complex formation and phosphorylation of TAK1/MAP3K7. In turn, activates host NF-kappa-B signaling pathway.</text>
</comment>
<comment type="subunit">
    <text evidence="1 2">Toxicity requires sequential binding and synergistic association of a class S and a class F component which form heterooligomeric complexes. HlgB (class F) associates with either hlgA thus forming an AB toxin or with hlgC thus forming a CB toxin (By similarity). Interacts with host AMFR (By similarity).</text>
</comment>
<comment type="similarity">
    <text evidence="4">Belongs to the aerolysin family.</text>
</comment>
<name>HLGB_STAAR</name>
<gene>
    <name type="primary">hlgB</name>
    <name type="ordered locus">SAR2511</name>
</gene>
<feature type="signal peptide" evidence="3">
    <location>
        <begin position="1"/>
        <end position="25"/>
    </location>
</feature>
<feature type="chain" id="PRO_0000045218" description="Gamma-hemolysin component B">
    <location>
        <begin position="26"/>
        <end position="325"/>
    </location>
</feature>
<evidence type="ECO:0000250" key="1"/>
<evidence type="ECO:0000250" key="2">
    <source>
        <dbReference type="UniProtKB" id="Q2FVK1"/>
    </source>
</evidence>
<evidence type="ECO:0000255" key="3"/>
<evidence type="ECO:0000305" key="4"/>